<accession>Q8C5U4</accession>
<organism>
    <name type="scientific">Mus musculus</name>
    <name type="common">Mouse</name>
    <dbReference type="NCBI Taxonomy" id="10090"/>
    <lineage>
        <taxon>Eukaryota</taxon>
        <taxon>Metazoa</taxon>
        <taxon>Chordata</taxon>
        <taxon>Craniata</taxon>
        <taxon>Vertebrata</taxon>
        <taxon>Euteleostomi</taxon>
        <taxon>Mammalia</taxon>
        <taxon>Eutheria</taxon>
        <taxon>Euarchontoglires</taxon>
        <taxon>Glires</taxon>
        <taxon>Rodentia</taxon>
        <taxon>Myomorpha</taxon>
        <taxon>Muroidea</taxon>
        <taxon>Muridae</taxon>
        <taxon>Murinae</taxon>
        <taxon>Mus</taxon>
        <taxon>Mus</taxon>
    </lineage>
</organism>
<sequence>MENQLWQNTLRCCEQYQESPQDAENILFLLLGLIILVNISINVATAMWQGLQNAIDKMIFWMNQKTEVVQVTECPPKEPQPANVQDVHIHCILDPVQVKMAQPTQCSSSSSHYFCKRSNDRRSRRRYGYQQGNLQIHQSSQQQGCLSHQQRLRNRPLSRGYPPFRKQPQGHKMSQMRPMPFFDMEDRDSLPEGHSCPHAKQPRRGWGSLCKPVRLASNVGLWGRQGGILASLPLPSLYLSPELRRLPKRVEAKSELRLQGFGPHYSQSRIWGTVEAEQWASSPPPPRRLLPNPSWVTVGYSSFPSGGHIPYDARDQWRRGTEGCEPPPAFVPRNPREVQGYRDHNSQAHRQNFSSHTHSQPNHSPPQSMGHVGYSSRESHEVRRRAPDWIEVFPSRHPLTTSTSLTALGEASYQRAPPASSGLMIPHSSQRLAEVQISDPTPPPTTFVPLSRNPGGNATYQVYDSLELKRQVQENRGRASSLPPPSTSASRPSLHRSRTGKLN</sequence>
<keyword id="KW-0472">Membrane</keyword>
<keyword id="KW-1185">Reference proteome</keyword>
<keyword id="KW-0812">Transmembrane</keyword>
<keyword id="KW-1133">Transmembrane helix</keyword>
<name>SPEM2_MOUSE</name>
<proteinExistence type="evidence at transcript level"/>
<protein>
    <recommendedName>
        <fullName>Uncharacterized protein SPEM2</fullName>
    </recommendedName>
</protein>
<reference key="1">
    <citation type="journal article" date="2005" name="Science">
        <title>The transcriptional landscape of the mammalian genome.</title>
        <authorList>
            <person name="Carninci P."/>
            <person name="Kasukawa T."/>
            <person name="Katayama S."/>
            <person name="Gough J."/>
            <person name="Frith M.C."/>
            <person name="Maeda N."/>
            <person name="Oyama R."/>
            <person name="Ravasi T."/>
            <person name="Lenhard B."/>
            <person name="Wells C."/>
            <person name="Kodzius R."/>
            <person name="Shimokawa K."/>
            <person name="Bajic V.B."/>
            <person name="Brenner S.E."/>
            <person name="Batalov S."/>
            <person name="Forrest A.R."/>
            <person name="Zavolan M."/>
            <person name="Davis M.J."/>
            <person name="Wilming L.G."/>
            <person name="Aidinis V."/>
            <person name="Allen J.E."/>
            <person name="Ambesi-Impiombato A."/>
            <person name="Apweiler R."/>
            <person name="Aturaliya R.N."/>
            <person name="Bailey T.L."/>
            <person name="Bansal M."/>
            <person name="Baxter L."/>
            <person name="Beisel K.W."/>
            <person name="Bersano T."/>
            <person name="Bono H."/>
            <person name="Chalk A.M."/>
            <person name="Chiu K.P."/>
            <person name="Choudhary V."/>
            <person name="Christoffels A."/>
            <person name="Clutterbuck D.R."/>
            <person name="Crowe M.L."/>
            <person name="Dalla E."/>
            <person name="Dalrymple B.P."/>
            <person name="de Bono B."/>
            <person name="Della Gatta G."/>
            <person name="di Bernardo D."/>
            <person name="Down T."/>
            <person name="Engstrom P."/>
            <person name="Fagiolini M."/>
            <person name="Faulkner G."/>
            <person name="Fletcher C.F."/>
            <person name="Fukushima T."/>
            <person name="Furuno M."/>
            <person name="Futaki S."/>
            <person name="Gariboldi M."/>
            <person name="Georgii-Hemming P."/>
            <person name="Gingeras T.R."/>
            <person name="Gojobori T."/>
            <person name="Green R.E."/>
            <person name="Gustincich S."/>
            <person name="Harbers M."/>
            <person name="Hayashi Y."/>
            <person name="Hensch T.K."/>
            <person name="Hirokawa N."/>
            <person name="Hill D."/>
            <person name="Huminiecki L."/>
            <person name="Iacono M."/>
            <person name="Ikeo K."/>
            <person name="Iwama A."/>
            <person name="Ishikawa T."/>
            <person name="Jakt M."/>
            <person name="Kanapin A."/>
            <person name="Katoh M."/>
            <person name="Kawasawa Y."/>
            <person name="Kelso J."/>
            <person name="Kitamura H."/>
            <person name="Kitano H."/>
            <person name="Kollias G."/>
            <person name="Krishnan S.P."/>
            <person name="Kruger A."/>
            <person name="Kummerfeld S.K."/>
            <person name="Kurochkin I.V."/>
            <person name="Lareau L.F."/>
            <person name="Lazarevic D."/>
            <person name="Lipovich L."/>
            <person name="Liu J."/>
            <person name="Liuni S."/>
            <person name="McWilliam S."/>
            <person name="Madan Babu M."/>
            <person name="Madera M."/>
            <person name="Marchionni L."/>
            <person name="Matsuda H."/>
            <person name="Matsuzawa S."/>
            <person name="Miki H."/>
            <person name="Mignone F."/>
            <person name="Miyake S."/>
            <person name="Morris K."/>
            <person name="Mottagui-Tabar S."/>
            <person name="Mulder N."/>
            <person name="Nakano N."/>
            <person name="Nakauchi H."/>
            <person name="Ng P."/>
            <person name="Nilsson R."/>
            <person name="Nishiguchi S."/>
            <person name="Nishikawa S."/>
            <person name="Nori F."/>
            <person name="Ohara O."/>
            <person name="Okazaki Y."/>
            <person name="Orlando V."/>
            <person name="Pang K.C."/>
            <person name="Pavan W.J."/>
            <person name="Pavesi G."/>
            <person name="Pesole G."/>
            <person name="Petrovsky N."/>
            <person name="Piazza S."/>
            <person name="Reed J."/>
            <person name="Reid J.F."/>
            <person name="Ring B.Z."/>
            <person name="Ringwald M."/>
            <person name="Rost B."/>
            <person name="Ruan Y."/>
            <person name="Salzberg S.L."/>
            <person name="Sandelin A."/>
            <person name="Schneider C."/>
            <person name="Schoenbach C."/>
            <person name="Sekiguchi K."/>
            <person name="Semple C.A."/>
            <person name="Seno S."/>
            <person name="Sessa L."/>
            <person name="Sheng Y."/>
            <person name="Shibata Y."/>
            <person name="Shimada H."/>
            <person name="Shimada K."/>
            <person name="Silva D."/>
            <person name="Sinclair B."/>
            <person name="Sperling S."/>
            <person name="Stupka E."/>
            <person name="Sugiura K."/>
            <person name="Sultana R."/>
            <person name="Takenaka Y."/>
            <person name="Taki K."/>
            <person name="Tammoja K."/>
            <person name="Tan S.L."/>
            <person name="Tang S."/>
            <person name="Taylor M.S."/>
            <person name="Tegner J."/>
            <person name="Teichmann S.A."/>
            <person name="Ueda H.R."/>
            <person name="van Nimwegen E."/>
            <person name="Verardo R."/>
            <person name="Wei C.L."/>
            <person name="Yagi K."/>
            <person name="Yamanishi H."/>
            <person name="Zabarovsky E."/>
            <person name="Zhu S."/>
            <person name="Zimmer A."/>
            <person name="Hide W."/>
            <person name="Bult C."/>
            <person name="Grimmond S.M."/>
            <person name="Teasdale R.D."/>
            <person name="Liu E.T."/>
            <person name="Brusic V."/>
            <person name="Quackenbush J."/>
            <person name="Wahlestedt C."/>
            <person name="Mattick J.S."/>
            <person name="Hume D.A."/>
            <person name="Kai C."/>
            <person name="Sasaki D."/>
            <person name="Tomaru Y."/>
            <person name="Fukuda S."/>
            <person name="Kanamori-Katayama M."/>
            <person name="Suzuki M."/>
            <person name="Aoki J."/>
            <person name="Arakawa T."/>
            <person name="Iida J."/>
            <person name="Imamura K."/>
            <person name="Itoh M."/>
            <person name="Kato T."/>
            <person name="Kawaji H."/>
            <person name="Kawagashira N."/>
            <person name="Kawashima T."/>
            <person name="Kojima M."/>
            <person name="Kondo S."/>
            <person name="Konno H."/>
            <person name="Nakano K."/>
            <person name="Ninomiya N."/>
            <person name="Nishio T."/>
            <person name="Okada M."/>
            <person name="Plessy C."/>
            <person name="Shibata K."/>
            <person name="Shiraki T."/>
            <person name="Suzuki S."/>
            <person name="Tagami M."/>
            <person name="Waki K."/>
            <person name="Watahiki A."/>
            <person name="Okamura-Oho Y."/>
            <person name="Suzuki H."/>
            <person name="Kawai J."/>
            <person name="Hayashizaki Y."/>
        </authorList>
    </citation>
    <scope>NUCLEOTIDE SEQUENCE [LARGE SCALE MRNA]</scope>
    <source>
        <strain>C57BL/6J</strain>
        <tissue>Testis</tissue>
    </source>
</reference>
<reference key="2">
    <citation type="journal article" date="2009" name="PLoS Biol.">
        <title>Lineage-specific biology revealed by a finished genome assembly of the mouse.</title>
        <authorList>
            <person name="Church D.M."/>
            <person name="Goodstadt L."/>
            <person name="Hillier L.W."/>
            <person name="Zody M.C."/>
            <person name="Goldstein S."/>
            <person name="She X."/>
            <person name="Bult C.J."/>
            <person name="Agarwala R."/>
            <person name="Cherry J.L."/>
            <person name="DiCuccio M."/>
            <person name="Hlavina W."/>
            <person name="Kapustin Y."/>
            <person name="Meric P."/>
            <person name="Maglott D."/>
            <person name="Birtle Z."/>
            <person name="Marques A.C."/>
            <person name="Graves T."/>
            <person name="Zhou S."/>
            <person name="Teague B."/>
            <person name="Potamousis K."/>
            <person name="Churas C."/>
            <person name="Place M."/>
            <person name="Herschleb J."/>
            <person name="Runnheim R."/>
            <person name="Forrest D."/>
            <person name="Amos-Landgraf J."/>
            <person name="Schwartz D.C."/>
            <person name="Cheng Z."/>
            <person name="Lindblad-Toh K."/>
            <person name="Eichler E.E."/>
            <person name="Ponting C.P."/>
        </authorList>
    </citation>
    <scope>NUCLEOTIDE SEQUENCE [LARGE SCALE GENOMIC DNA]</scope>
    <source>
        <strain>C57BL/6J</strain>
    </source>
</reference>
<reference key="3">
    <citation type="journal article" date="2004" name="Genome Res.">
        <title>The status, quality, and expansion of the NIH full-length cDNA project: the Mammalian Gene Collection (MGC).</title>
        <authorList>
            <consortium name="The MGC Project Team"/>
        </authorList>
    </citation>
    <scope>NUCLEOTIDE SEQUENCE [LARGE SCALE MRNA]</scope>
</reference>
<dbReference type="EMBL" id="AK077090">
    <property type="protein sequence ID" value="BAC36606.1"/>
    <property type="molecule type" value="mRNA"/>
</dbReference>
<dbReference type="EMBL" id="AL603707">
    <property type="status" value="NOT_ANNOTATED_CDS"/>
    <property type="molecule type" value="Genomic_DNA"/>
</dbReference>
<dbReference type="EMBL" id="BC137961">
    <property type="protein sequence ID" value="AAI37962.1"/>
    <property type="molecule type" value="mRNA"/>
</dbReference>
<dbReference type="CCDS" id="CCDS24912.1"/>
<dbReference type="RefSeq" id="NP_780577.1">
    <property type="nucleotide sequence ID" value="NM_175368.2"/>
</dbReference>
<dbReference type="STRING" id="10090.ENSMUSP00000051204"/>
<dbReference type="iPTMnet" id="Q8C5U4"/>
<dbReference type="PhosphoSitePlus" id="Q8C5U4"/>
<dbReference type="PaxDb" id="10090-ENSMUSP00000051204"/>
<dbReference type="ProteomicsDB" id="263319"/>
<dbReference type="Antibodypedia" id="6127">
    <property type="antibodies" value="60 antibodies from 15 providers"/>
</dbReference>
<dbReference type="DNASU" id="108803"/>
<dbReference type="Ensembl" id="ENSMUST00000056941.3">
    <property type="protein sequence ID" value="ENSMUSP00000051204.3"/>
    <property type="gene ID" value="ENSMUSG00000044084.3"/>
</dbReference>
<dbReference type="GeneID" id="108803"/>
<dbReference type="KEGG" id="mmu:108803"/>
<dbReference type="UCSC" id="uc007jru.1">
    <property type="organism name" value="mouse"/>
</dbReference>
<dbReference type="AGR" id="MGI:1918293"/>
<dbReference type="CTD" id="201243"/>
<dbReference type="MGI" id="MGI:1918293">
    <property type="gene designation" value="Spem2"/>
</dbReference>
<dbReference type="VEuPathDB" id="HostDB:ENSMUSG00000044084"/>
<dbReference type="eggNOG" id="ENOG502RKNT">
    <property type="taxonomic scope" value="Eukaryota"/>
</dbReference>
<dbReference type="GeneTree" id="ENSGT00510000049558"/>
<dbReference type="HOGENOM" id="CLU_045547_0_0_1"/>
<dbReference type="InParanoid" id="Q8C5U4"/>
<dbReference type="OMA" id="DVHIHCT"/>
<dbReference type="OrthoDB" id="9450448at2759"/>
<dbReference type="PhylomeDB" id="Q8C5U4"/>
<dbReference type="TreeFam" id="TF337389"/>
<dbReference type="BioGRID-ORCS" id="108803">
    <property type="hits" value="2 hits in 76 CRISPR screens"/>
</dbReference>
<dbReference type="PRO" id="PR:Q8C5U4"/>
<dbReference type="Proteomes" id="UP000000589">
    <property type="component" value="Chromosome 11"/>
</dbReference>
<dbReference type="RNAct" id="Q8C5U4">
    <property type="molecule type" value="protein"/>
</dbReference>
<dbReference type="Bgee" id="ENSMUSG00000044084">
    <property type="expression patterns" value="Expressed in testis and 3 other cell types or tissues"/>
</dbReference>
<dbReference type="GO" id="GO:0016020">
    <property type="term" value="C:membrane"/>
    <property type="evidence" value="ECO:0007669"/>
    <property type="project" value="UniProtKB-SubCell"/>
</dbReference>
<dbReference type="InterPro" id="IPR031368">
    <property type="entry name" value="SPEM1_N"/>
</dbReference>
<dbReference type="PANTHER" id="PTHR34834:SF2">
    <property type="entry name" value="SPEM FAMILY MEMBER 2"/>
    <property type="match status" value="1"/>
</dbReference>
<dbReference type="PANTHER" id="PTHR34834">
    <property type="entry name" value="SPERMATID MATURATION PROTEIN 1"/>
    <property type="match status" value="1"/>
</dbReference>
<dbReference type="Pfam" id="PF15670">
    <property type="entry name" value="Spem1"/>
    <property type="match status" value="1"/>
</dbReference>
<gene>
    <name evidence="4" type="primary">Spem2</name>
</gene>
<comment type="subcellular location">
    <subcellularLocation>
        <location evidence="3">Membrane</location>
        <topology evidence="3">Single-pass membrane protein</topology>
    </subcellularLocation>
</comment>
<evidence type="ECO:0000255" key="1"/>
<evidence type="ECO:0000256" key="2">
    <source>
        <dbReference type="SAM" id="MobiDB-lite"/>
    </source>
</evidence>
<evidence type="ECO:0000305" key="3"/>
<evidence type="ECO:0000312" key="4">
    <source>
        <dbReference type="MGI" id="MGI:1918293"/>
    </source>
</evidence>
<feature type="chain" id="PRO_0000387570" description="Uncharacterized protein SPEM2">
    <location>
        <begin position="1"/>
        <end position="503"/>
    </location>
</feature>
<feature type="transmembrane region" description="Helical" evidence="1">
    <location>
        <begin position="26"/>
        <end position="46"/>
    </location>
</feature>
<feature type="region of interest" description="Disordered" evidence="2">
    <location>
        <begin position="155"/>
        <end position="176"/>
    </location>
</feature>
<feature type="region of interest" description="Disordered" evidence="2">
    <location>
        <begin position="311"/>
        <end position="381"/>
    </location>
</feature>
<feature type="region of interest" description="Disordered" evidence="2">
    <location>
        <begin position="436"/>
        <end position="456"/>
    </location>
</feature>
<feature type="region of interest" description="Disordered" evidence="2">
    <location>
        <begin position="472"/>
        <end position="503"/>
    </location>
</feature>
<feature type="compositionally biased region" description="Basic and acidic residues" evidence="2">
    <location>
        <begin position="311"/>
        <end position="322"/>
    </location>
</feature>
<feature type="compositionally biased region" description="Basic and acidic residues" evidence="2">
    <location>
        <begin position="334"/>
        <end position="346"/>
    </location>
</feature>
<feature type="compositionally biased region" description="Polar residues" evidence="2">
    <location>
        <begin position="348"/>
        <end position="367"/>
    </location>
</feature>
<feature type="compositionally biased region" description="Basic residues" evidence="2">
    <location>
        <begin position="493"/>
        <end position="503"/>
    </location>
</feature>